<comment type="similarity">
    <text evidence="1">Belongs to the universal ribosomal protein uS9 family.</text>
</comment>
<organism>
    <name type="scientific">Borrelia duttonii (strain Ly)</name>
    <dbReference type="NCBI Taxonomy" id="412419"/>
    <lineage>
        <taxon>Bacteria</taxon>
        <taxon>Pseudomonadati</taxon>
        <taxon>Spirochaetota</taxon>
        <taxon>Spirochaetia</taxon>
        <taxon>Spirochaetales</taxon>
        <taxon>Borreliaceae</taxon>
        <taxon>Borrelia</taxon>
    </lineage>
</organism>
<accession>B5RLS3</accession>
<dbReference type="EMBL" id="CP000976">
    <property type="protein sequence ID" value="ACH93289.1"/>
    <property type="molecule type" value="Genomic_DNA"/>
</dbReference>
<dbReference type="RefSeq" id="WP_012538100.1">
    <property type="nucleotide sequence ID" value="NC_011229.1"/>
</dbReference>
<dbReference type="SMR" id="B5RLS3"/>
<dbReference type="STRING" id="412419.BDU_337"/>
<dbReference type="KEGG" id="bdu:BDU_337"/>
<dbReference type="eggNOG" id="COG0103">
    <property type="taxonomic scope" value="Bacteria"/>
</dbReference>
<dbReference type="HOGENOM" id="CLU_046483_2_1_12"/>
<dbReference type="OrthoDB" id="9803965at2"/>
<dbReference type="Proteomes" id="UP000000611">
    <property type="component" value="Chromosome"/>
</dbReference>
<dbReference type="GO" id="GO:0022627">
    <property type="term" value="C:cytosolic small ribosomal subunit"/>
    <property type="evidence" value="ECO:0007669"/>
    <property type="project" value="TreeGrafter"/>
</dbReference>
<dbReference type="GO" id="GO:0003723">
    <property type="term" value="F:RNA binding"/>
    <property type="evidence" value="ECO:0007669"/>
    <property type="project" value="TreeGrafter"/>
</dbReference>
<dbReference type="GO" id="GO:0003735">
    <property type="term" value="F:structural constituent of ribosome"/>
    <property type="evidence" value="ECO:0007669"/>
    <property type="project" value="InterPro"/>
</dbReference>
<dbReference type="GO" id="GO:0006412">
    <property type="term" value="P:translation"/>
    <property type="evidence" value="ECO:0007669"/>
    <property type="project" value="UniProtKB-UniRule"/>
</dbReference>
<dbReference type="FunFam" id="3.30.230.10:FF:000001">
    <property type="entry name" value="30S ribosomal protein S9"/>
    <property type="match status" value="1"/>
</dbReference>
<dbReference type="Gene3D" id="3.30.230.10">
    <property type="match status" value="1"/>
</dbReference>
<dbReference type="HAMAP" id="MF_00532_B">
    <property type="entry name" value="Ribosomal_uS9_B"/>
    <property type="match status" value="1"/>
</dbReference>
<dbReference type="InterPro" id="IPR020568">
    <property type="entry name" value="Ribosomal_Su5_D2-typ_SF"/>
</dbReference>
<dbReference type="InterPro" id="IPR000754">
    <property type="entry name" value="Ribosomal_uS9"/>
</dbReference>
<dbReference type="InterPro" id="IPR023035">
    <property type="entry name" value="Ribosomal_uS9_bac/plastid"/>
</dbReference>
<dbReference type="InterPro" id="IPR020574">
    <property type="entry name" value="Ribosomal_uS9_CS"/>
</dbReference>
<dbReference type="InterPro" id="IPR014721">
    <property type="entry name" value="Ribsml_uS5_D2-typ_fold_subgr"/>
</dbReference>
<dbReference type="NCBIfam" id="NF001099">
    <property type="entry name" value="PRK00132.1"/>
    <property type="match status" value="1"/>
</dbReference>
<dbReference type="PANTHER" id="PTHR21569">
    <property type="entry name" value="RIBOSOMAL PROTEIN S9"/>
    <property type="match status" value="1"/>
</dbReference>
<dbReference type="PANTHER" id="PTHR21569:SF1">
    <property type="entry name" value="SMALL RIBOSOMAL SUBUNIT PROTEIN US9M"/>
    <property type="match status" value="1"/>
</dbReference>
<dbReference type="Pfam" id="PF00380">
    <property type="entry name" value="Ribosomal_S9"/>
    <property type="match status" value="1"/>
</dbReference>
<dbReference type="SUPFAM" id="SSF54211">
    <property type="entry name" value="Ribosomal protein S5 domain 2-like"/>
    <property type="match status" value="1"/>
</dbReference>
<dbReference type="PROSITE" id="PS00360">
    <property type="entry name" value="RIBOSOMAL_S9"/>
    <property type="match status" value="1"/>
</dbReference>
<evidence type="ECO:0000255" key="1">
    <source>
        <dbReference type="HAMAP-Rule" id="MF_00532"/>
    </source>
</evidence>
<evidence type="ECO:0000305" key="2"/>
<reference key="1">
    <citation type="journal article" date="2008" name="PLoS Genet.">
        <title>The genome of Borrelia recurrentis, the agent of deadly louse-borne relapsing fever, is a degraded subset of tick-borne Borrelia duttonii.</title>
        <authorList>
            <person name="Lescot M."/>
            <person name="Audic S."/>
            <person name="Robert C."/>
            <person name="Nguyen T.T."/>
            <person name="Blanc G."/>
            <person name="Cutler S.J."/>
            <person name="Wincker P."/>
            <person name="Couloux A."/>
            <person name="Claverie J.-M."/>
            <person name="Raoult D."/>
            <person name="Drancourt M."/>
        </authorList>
    </citation>
    <scope>NUCLEOTIDE SEQUENCE [LARGE SCALE GENOMIC DNA]</scope>
    <source>
        <strain>Ly</strain>
    </source>
</reference>
<proteinExistence type="inferred from homology"/>
<keyword id="KW-0687">Ribonucleoprotein</keyword>
<keyword id="KW-0689">Ribosomal protein</keyword>
<name>RS9_BORDL</name>
<protein>
    <recommendedName>
        <fullName evidence="1">Small ribosomal subunit protein uS9</fullName>
    </recommendedName>
    <alternativeName>
        <fullName evidence="2">30S ribosomal protein S9</fullName>
    </alternativeName>
</protein>
<sequence>MAKSDVKGVNLGMGTGRRKSSVARVYIREGKGDIKINHKNFDVYMQLEKLKTIALSPLALTHTLGKYDIYINVYGGGISGQAGAIRHGIARALFDLDEEYKMVLKSNGFLTRDSRKVERKKFGKKKARKSFQFSKR</sequence>
<gene>
    <name evidence="1" type="primary">rpsI</name>
    <name type="ordered locus">BDU_337</name>
</gene>
<feature type="chain" id="PRO_1000128086" description="Small ribosomal subunit protein uS9">
    <location>
        <begin position="1"/>
        <end position="136"/>
    </location>
</feature>